<name>TSGA_YERPS</name>
<reference key="1">
    <citation type="journal article" date="2004" name="Proc. Natl. Acad. Sci. U.S.A.">
        <title>Insights into the evolution of Yersinia pestis through whole-genome comparison with Yersinia pseudotuberculosis.</title>
        <authorList>
            <person name="Chain P.S.G."/>
            <person name="Carniel E."/>
            <person name="Larimer F.W."/>
            <person name="Lamerdin J."/>
            <person name="Stoutland P.O."/>
            <person name="Regala W.M."/>
            <person name="Georgescu A.M."/>
            <person name="Vergez L.M."/>
            <person name="Land M.L."/>
            <person name="Motin V.L."/>
            <person name="Brubaker R.R."/>
            <person name="Fowler J."/>
            <person name="Hinnebusch J."/>
            <person name="Marceau M."/>
            <person name="Medigue C."/>
            <person name="Simonet M."/>
            <person name="Chenal-Francisque V."/>
            <person name="Souza B."/>
            <person name="Dacheux D."/>
            <person name="Elliott J.M."/>
            <person name="Derbise A."/>
            <person name="Hauser L.J."/>
            <person name="Garcia E."/>
        </authorList>
    </citation>
    <scope>NUCLEOTIDE SEQUENCE [LARGE SCALE GENOMIC DNA]</scope>
    <source>
        <strain>IP32953</strain>
    </source>
</reference>
<gene>
    <name evidence="1" type="primary">tsgA</name>
    <name type="ordered locus">YPTB3738</name>
</gene>
<organism>
    <name type="scientific">Yersinia pseudotuberculosis serotype I (strain IP32953)</name>
    <dbReference type="NCBI Taxonomy" id="273123"/>
    <lineage>
        <taxon>Bacteria</taxon>
        <taxon>Pseudomonadati</taxon>
        <taxon>Pseudomonadota</taxon>
        <taxon>Gammaproteobacteria</taxon>
        <taxon>Enterobacterales</taxon>
        <taxon>Yersiniaceae</taxon>
        <taxon>Yersinia</taxon>
    </lineage>
</organism>
<evidence type="ECO:0000255" key="1">
    <source>
        <dbReference type="HAMAP-Rule" id="MF_01044"/>
    </source>
</evidence>
<proteinExistence type="inferred from homology"/>
<feature type="chain" id="PRO_0000206503" description="Protein TsgA homolog">
    <location>
        <begin position="1"/>
        <end position="394"/>
    </location>
</feature>
<feature type="transmembrane region" description="Helical" evidence="1">
    <location>
        <begin position="11"/>
        <end position="31"/>
    </location>
</feature>
<feature type="transmembrane region" description="Helical" evidence="1">
    <location>
        <begin position="51"/>
        <end position="71"/>
    </location>
</feature>
<feature type="transmembrane region" description="Helical" evidence="1">
    <location>
        <begin position="76"/>
        <end position="96"/>
    </location>
</feature>
<feature type="transmembrane region" description="Helical" evidence="1">
    <location>
        <begin position="101"/>
        <end position="121"/>
    </location>
</feature>
<feature type="transmembrane region" description="Helical" evidence="1">
    <location>
        <begin position="134"/>
        <end position="154"/>
    </location>
</feature>
<feature type="transmembrane region" description="Helical" evidence="1">
    <location>
        <begin position="162"/>
        <end position="182"/>
    </location>
</feature>
<feature type="transmembrane region" description="Helical" evidence="1">
    <location>
        <begin position="206"/>
        <end position="226"/>
    </location>
</feature>
<feature type="transmembrane region" description="Helical" evidence="1">
    <location>
        <begin position="246"/>
        <end position="266"/>
    </location>
</feature>
<feature type="transmembrane region" description="Helical" evidence="1">
    <location>
        <begin position="274"/>
        <end position="294"/>
    </location>
</feature>
<feature type="transmembrane region" description="Helical" evidence="1">
    <location>
        <begin position="302"/>
        <end position="322"/>
    </location>
</feature>
<feature type="transmembrane region" description="Helical" evidence="1">
    <location>
        <begin position="334"/>
        <end position="354"/>
    </location>
</feature>
<feature type="transmembrane region" description="Helical" evidence="1">
    <location>
        <begin position="363"/>
        <end position="383"/>
    </location>
</feature>
<dbReference type="EMBL" id="BX936398">
    <property type="protein sequence ID" value="CAH22976.1"/>
    <property type="molecule type" value="Genomic_DNA"/>
</dbReference>
<dbReference type="RefSeq" id="WP_011193229.1">
    <property type="nucleotide sequence ID" value="NC_006155.1"/>
</dbReference>
<dbReference type="SMR" id="Q664N1"/>
<dbReference type="KEGG" id="ypo:BZ17_2848"/>
<dbReference type="KEGG" id="yps:YPTB3738"/>
<dbReference type="PATRIC" id="fig|273123.14.peg.2989"/>
<dbReference type="Proteomes" id="UP000001011">
    <property type="component" value="Chromosome"/>
</dbReference>
<dbReference type="GO" id="GO:0005886">
    <property type="term" value="C:plasma membrane"/>
    <property type="evidence" value="ECO:0007669"/>
    <property type="project" value="UniProtKB-SubCell"/>
</dbReference>
<dbReference type="GO" id="GO:0022857">
    <property type="term" value="F:transmembrane transporter activity"/>
    <property type="evidence" value="ECO:0007669"/>
    <property type="project" value="InterPro"/>
</dbReference>
<dbReference type="Gene3D" id="1.20.1250.20">
    <property type="entry name" value="MFS general substrate transporter like domains"/>
    <property type="match status" value="2"/>
</dbReference>
<dbReference type="HAMAP" id="MF_01044">
    <property type="entry name" value="MFS_TsgA"/>
    <property type="match status" value="1"/>
</dbReference>
<dbReference type="InterPro" id="IPR011701">
    <property type="entry name" value="MFS"/>
</dbReference>
<dbReference type="InterPro" id="IPR020846">
    <property type="entry name" value="MFS_dom"/>
</dbReference>
<dbReference type="InterPro" id="IPR036259">
    <property type="entry name" value="MFS_trans_sf"/>
</dbReference>
<dbReference type="InterPro" id="IPR023528">
    <property type="entry name" value="MFS_TsgA"/>
</dbReference>
<dbReference type="InterPro" id="IPR050375">
    <property type="entry name" value="MFS_TsgA-like"/>
</dbReference>
<dbReference type="NCBIfam" id="NF002982">
    <property type="entry name" value="PRK03699.1"/>
    <property type="match status" value="1"/>
</dbReference>
<dbReference type="PANTHER" id="PTHR43702">
    <property type="entry name" value="L-FUCOSE-PROTON SYMPORTER"/>
    <property type="match status" value="1"/>
</dbReference>
<dbReference type="PANTHER" id="PTHR43702:SF3">
    <property type="entry name" value="PROTEIN TSGA"/>
    <property type="match status" value="1"/>
</dbReference>
<dbReference type="Pfam" id="PF07690">
    <property type="entry name" value="MFS_1"/>
    <property type="match status" value="1"/>
</dbReference>
<dbReference type="SUPFAM" id="SSF103473">
    <property type="entry name" value="MFS general substrate transporter"/>
    <property type="match status" value="1"/>
</dbReference>
<dbReference type="PROSITE" id="PS50850">
    <property type="entry name" value="MFS"/>
    <property type="match status" value="1"/>
</dbReference>
<sequence>MNNSNRIRLTWISYLSYALTGALVIVTGIVMGNIAEYFNLPIASMSNTFTFLNAGILISIFLNAWLMEIIPLKRQLVFGFILMLIAIAGLMVGHNLMIFSISMFIFGVVSGITMSIGTFLVTHMYEGRQRGSRLLFTDSFFSMAGMIFPIAAAMLLARHIEWYWVYACIGLLYVGIFVLTLCSEFPVLGHKATDQSKPVVKEKWGVGVLFLAIAALCYILGQLGFIQWVPEYATKTFNMNISQAGQLVSNFWISYMIGMWIFSFILRFFDLQRIVTVLAAMATLAMYLFVSTDNPAYLSYYILALGFVSSAIYTTLITLGSLQTKVSSPKLVNFILTCGTVGTMLTFVVTGPIVANNGVHAALATANGLYLAVFILCLALGFFTKHRSHGHVTH</sequence>
<protein>
    <recommendedName>
        <fullName evidence="1">Protein TsgA homolog</fullName>
    </recommendedName>
</protein>
<comment type="subcellular location">
    <subcellularLocation>
        <location evidence="1">Cell inner membrane</location>
        <topology evidence="1">Multi-pass membrane protein</topology>
    </subcellularLocation>
</comment>
<comment type="similarity">
    <text evidence="1">Belongs to the major facilitator superfamily. TsgA family.</text>
</comment>
<keyword id="KW-0997">Cell inner membrane</keyword>
<keyword id="KW-1003">Cell membrane</keyword>
<keyword id="KW-0472">Membrane</keyword>
<keyword id="KW-0812">Transmembrane</keyword>
<keyword id="KW-1133">Transmembrane helix</keyword>
<accession>Q664N1</accession>